<organism>
    <name type="scientific">Rhizobium etli (strain ATCC 51251 / DSM 11541 / JCM 21823 / NBRC 15573 / CFN 42)</name>
    <dbReference type="NCBI Taxonomy" id="347834"/>
    <lineage>
        <taxon>Bacteria</taxon>
        <taxon>Pseudomonadati</taxon>
        <taxon>Pseudomonadota</taxon>
        <taxon>Alphaproteobacteria</taxon>
        <taxon>Hyphomicrobiales</taxon>
        <taxon>Rhizobiaceae</taxon>
        <taxon>Rhizobium/Agrobacterium group</taxon>
        <taxon>Rhizobium</taxon>
    </lineage>
</organism>
<dbReference type="EC" id="4.2.3.3" evidence="1"/>
<dbReference type="EMBL" id="CP000133">
    <property type="protein sequence ID" value="ABC88998.1"/>
    <property type="molecule type" value="Genomic_DNA"/>
</dbReference>
<dbReference type="RefSeq" id="WP_011423567.1">
    <property type="nucleotide sequence ID" value="NC_007761.1"/>
</dbReference>
<dbReference type="SMR" id="Q2KDT8"/>
<dbReference type="KEGG" id="ret:RHE_CH00173"/>
<dbReference type="eggNOG" id="COG1803">
    <property type="taxonomic scope" value="Bacteria"/>
</dbReference>
<dbReference type="HOGENOM" id="CLU_120420_1_0_5"/>
<dbReference type="OrthoDB" id="9787147at2"/>
<dbReference type="Proteomes" id="UP000001936">
    <property type="component" value="Chromosome"/>
</dbReference>
<dbReference type="GO" id="GO:0005829">
    <property type="term" value="C:cytosol"/>
    <property type="evidence" value="ECO:0007669"/>
    <property type="project" value="TreeGrafter"/>
</dbReference>
<dbReference type="GO" id="GO:0008929">
    <property type="term" value="F:methylglyoxal synthase activity"/>
    <property type="evidence" value="ECO:0007669"/>
    <property type="project" value="UniProtKB-UniRule"/>
</dbReference>
<dbReference type="GO" id="GO:0019242">
    <property type="term" value="P:methylglyoxal biosynthetic process"/>
    <property type="evidence" value="ECO:0007669"/>
    <property type="project" value="UniProtKB-UniRule"/>
</dbReference>
<dbReference type="CDD" id="cd01422">
    <property type="entry name" value="MGS"/>
    <property type="match status" value="1"/>
</dbReference>
<dbReference type="Gene3D" id="3.40.50.1380">
    <property type="entry name" value="Methylglyoxal synthase-like domain"/>
    <property type="match status" value="1"/>
</dbReference>
<dbReference type="HAMAP" id="MF_00549">
    <property type="entry name" value="Methylglyoxal_synth"/>
    <property type="match status" value="1"/>
</dbReference>
<dbReference type="InterPro" id="IPR004363">
    <property type="entry name" value="Methylgl_synth"/>
</dbReference>
<dbReference type="InterPro" id="IPR018148">
    <property type="entry name" value="Methylglyoxal_synth_AS"/>
</dbReference>
<dbReference type="InterPro" id="IPR011607">
    <property type="entry name" value="MGS-like_dom"/>
</dbReference>
<dbReference type="InterPro" id="IPR036914">
    <property type="entry name" value="MGS-like_dom_sf"/>
</dbReference>
<dbReference type="NCBIfam" id="TIGR00160">
    <property type="entry name" value="MGSA"/>
    <property type="match status" value="1"/>
</dbReference>
<dbReference type="NCBIfam" id="NF003559">
    <property type="entry name" value="PRK05234.1"/>
    <property type="match status" value="1"/>
</dbReference>
<dbReference type="PANTHER" id="PTHR30492">
    <property type="entry name" value="METHYLGLYOXAL SYNTHASE"/>
    <property type="match status" value="1"/>
</dbReference>
<dbReference type="PANTHER" id="PTHR30492:SF0">
    <property type="entry name" value="METHYLGLYOXAL SYNTHASE"/>
    <property type="match status" value="1"/>
</dbReference>
<dbReference type="Pfam" id="PF02142">
    <property type="entry name" value="MGS"/>
    <property type="match status" value="1"/>
</dbReference>
<dbReference type="PIRSF" id="PIRSF006614">
    <property type="entry name" value="Methylglyox_syn"/>
    <property type="match status" value="1"/>
</dbReference>
<dbReference type="SMART" id="SM00851">
    <property type="entry name" value="MGS"/>
    <property type="match status" value="1"/>
</dbReference>
<dbReference type="SUPFAM" id="SSF52335">
    <property type="entry name" value="Methylglyoxal synthase-like"/>
    <property type="match status" value="1"/>
</dbReference>
<dbReference type="PROSITE" id="PS01335">
    <property type="entry name" value="METHYLGLYOXAL_SYNTH"/>
    <property type="match status" value="1"/>
</dbReference>
<dbReference type="PROSITE" id="PS51855">
    <property type="entry name" value="MGS"/>
    <property type="match status" value="1"/>
</dbReference>
<keyword id="KW-0456">Lyase</keyword>
<keyword id="KW-1185">Reference proteome</keyword>
<reference key="1">
    <citation type="journal article" date="2006" name="Proc. Natl. Acad. Sci. U.S.A.">
        <title>The partitioned Rhizobium etli genome: genetic and metabolic redundancy in seven interacting replicons.</title>
        <authorList>
            <person name="Gonzalez V."/>
            <person name="Santamaria R.I."/>
            <person name="Bustos P."/>
            <person name="Hernandez-Gonzalez I."/>
            <person name="Medrano-Soto A."/>
            <person name="Moreno-Hagelsieb G."/>
            <person name="Janga S.C."/>
            <person name="Ramirez M.A."/>
            <person name="Jimenez-Jacinto V."/>
            <person name="Collado-Vides J."/>
            <person name="Davila G."/>
        </authorList>
    </citation>
    <scope>NUCLEOTIDE SEQUENCE [LARGE SCALE GENOMIC DNA]</scope>
    <source>
        <strain>ATCC 51251 / DSM 11541 / JCM 21823 / NBRC 15573 / CFN 42</strain>
    </source>
</reference>
<feature type="chain" id="PRO_1000017825" description="Methylglyoxal synthase">
    <location>
        <begin position="1"/>
        <end position="126"/>
    </location>
</feature>
<feature type="domain" description="MGS-like" evidence="1">
    <location>
        <begin position="1"/>
        <end position="126"/>
    </location>
</feature>
<feature type="active site" description="Proton donor/acceptor" evidence="1">
    <location>
        <position position="65"/>
    </location>
</feature>
<feature type="binding site" evidence="1">
    <location>
        <position position="12"/>
    </location>
    <ligand>
        <name>substrate</name>
    </ligand>
</feature>
<feature type="binding site" evidence="1">
    <location>
        <position position="16"/>
    </location>
    <ligand>
        <name>substrate</name>
    </ligand>
</feature>
<feature type="binding site" evidence="1">
    <location>
        <begin position="38"/>
        <end position="41"/>
    </location>
    <ligand>
        <name>substrate</name>
    </ligand>
</feature>
<feature type="binding site" evidence="1">
    <location>
        <begin position="59"/>
        <end position="60"/>
    </location>
    <ligand>
        <name>substrate</name>
    </ligand>
</feature>
<feature type="binding site" evidence="1">
    <location>
        <position position="92"/>
    </location>
    <ligand>
        <name>substrate</name>
    </ligand>
</feature>
<name>MGSA_RHIEC</name>
<proteinExistence type="inferred from homology"/>
<sequence length="126" mass="13419">MAGSKCLALIAHDQKKDDMAAFARANQELLSRWKIVATGTTGGRVLDAAPDLDVTRLKSGPLGGDQQIGALISTGEVDALIFFVDPLTPMPHDVDVKALMRLAIVYDIPMALNHATAIKLLPTLEA</sequence>
<gene>
    <name evidence="1" type="primary">mgsA</name>
    <name type="ordered locus">RHE_CH00173</name>
</gene>
<comment type="function">
    <text evidence="1">Catalyzes the formation of methylglyoxal from dihydroxyacetone phosphate.</text>
</comment>
<comment type="catalytic activity">
    <reaction evidence="1">
        <text>dihydroxyacetone phosphate = methylglyoxal + phosphate</text>
        <dbReference type="Rhea" id="RHEA:17937"/>
        <dbReference type="ChEBI" id="CHEBI:17158"/>
        <dbReference type="ChEBI" id="CHEBI:43474"/>
        <dbReference type="ChEBI" id="CHEBI:57642"/>
        <dbReference type="EC" id="4.2.3.3"/>
    </reaction>
</comment>
<comment type="similarity">
    <text evidence="1">Belongs to the methylglyoxal synthase family.</text>
</comment>
<evidence type="ECO:0000255" key="1">
    <source>
        <dbReference type="HAMAP-Rule" id="MF_00549"/>
    </source>
</evidence>
<protein>
    <recommendedName>
        <fullName evidence="1">Methylglyoxal synthase</fullName>
        <shortName evidence="1">MGS</shortName>
        <ecNumber evidence="1">4.2.3.3</ecNumber>
    </recommendedName>
</protein>
<accession>Q2KDT8</accession>